<comment type="function">
    <text evidence="1">Phosphorolytic 3'-5' exoribonuclease that plays an important role in tRNA 3'-end maturation. Removes nucleotide residues following the 3'-CCA terminus of tRNAs; can also add nucleotides to the ends of RNA molecules by using nucleoside diphosphates as substrates, but this may not be physiologically important. Probably plays a role in initiation of 16S rRNA degradation (leading to ribosome degradation) during starvation.</text>
</comment>
<comment type="catalytic activity">
    <reaction evidence="1">
        <text>tRNA(n+1) + phosphate = tRNA(n) + a ribonucleoside 5'-diphosphate</text>
        <dbReference type="Rhea" id="RHEA:10628"/>
        <dbReference type="Rhea" id="RHEA-COMP:17343"/>
        <dbReference type="Rhea" id="RHEA-COMP:17344"/>
        <dbReference type="ChEBI" id="CHEBI:43474"/>
        <dbReference type="ChEBI" id="CHEBI:57930"/>
        <dbReference type="ChEBI" id="CHEBI:173114"/>
        <dbReference type="EC" id="2.7.7.56"/>
    </reaction>
</comment>
<comment type="subunit">
    <text evidence="1">Homohexameric ring arranged as a trimer of dimers.</text>
</comment>
<comment type="similarity">
    <text evidence="1">Belongs to the RNase PH family.</text>
</comment>
<gene>
    <name evidence="1" type="primary">rph</name>
    <name type="ordered locus">RPR_07315</name>
</gene>
<reference key="1">
    <citation type="journal article" date="2009" name="PLoS ONE">
        <title>Genome sequence of the endosymbiont Rickettsia peacockii and comparison with virulent Rickettsia rickettsii: identification of virulence factors.</title>
        <authorList>
            <person name="Felsheim R.F."/>
            <person name="Kurtti T.J."/>
            <person name="Munderloh U.G."/>
        </authorList>
    </citation>
    <scope>NUCLEOTIDE SEQUENCE [LARGE SCALE GENOMIC DNA]</scope>
    <source>
        <strain>Rustic</strain>
    </source>
</reference>
<name>RNPH_RICPU</name>
<accession>C4K2U2</accession>
<dbReference type="EC" id="2.7.7.56" evidence="1"/>
<dbReference type="EMBL" id="CP001227">
    <property type="protein sequence ID" value="ACR47887.1"/>
    <property type="molecule type" value="Genomic_DNA"/>
</dbReference>
<dbReference type="RefSeq" id="WP_010977568.1">
    <property type="nucleotide sequence ID" value="NC_012730.1"/>
</dbReference>
<dbReference type="SMR" id="C4K2U2"/>
<dbReference type="GeneID" id="928118"/>
<dbReference type="KEGG" id="rpk:RPR_07315"/>
<dbReference type="HOGENOM" id="CLU_050858_0_0_5"/>
<dbReference type="Proteomes" id="UP000005015">
    <property type="component" value="Chromosome"/>
</dbReference>
<dbReference type="GO" id="GO:0000175">
    <property type="term" value="F:3'-5'-RNA exonuclease activity"/>
    <property type="evidence" value="ECO:0007669"/>
    <property type="project" value="UniProtKB-UniRule"/>
</dbReference>
<dbReference type="GO" id="GO:0000049">
    <property type="term" value="F:tRNA binding"/>
    <property type="evidence" value="ECO:0007669"/>
    <property type="project" value="UniProtKB-UniRule"/>
</dbReference>
<dbReference type="GO" id="GO:0009022">
    <property type="term" value="F:tRNA nucleotidyltransferase activity"/>
    <property type="evidence" value="ECO:0007669"/>
    <property type="project" value="UniProtKB-UniRule"/>
</dbReference>
<dbReference type="GO" id="GO:0016075">
    <property type="term" value="P:rRNA catabolic process"/>
    <property type="evidence" value="ECO:0007669"/>
    <property type="project" value="UniProtKB-UniRule"/>
</dbReference>
<dbReference type="GO" id="GO:0006364">
    <property type="term" value="P:rRNA processing"/>
    <property type="evidence" value="ECO:0007669"/>
    <property type="project" value="UniProtKB-KW"/>
</dbReference>
<dbReference type="GO" id="GO:0008033">
    <property type="term" value="P:tRNA processing"/>
    <property type="evidence" value="ECO:0007669"/>
    <property type="project" value="UniProtKB-UniRule"/>
</dbReference>
<dbReference type="CDD" id="cd11362">
    <property type="entry name" value="RNase_PH_bact"/>
    <property type="match status" value="1"/>
</dbReference>
<dbReference type="FunFam" id="3.30.230.70:FF:000003">
    <property type="entry name" value="Ribonuclease PH"/>
    <property type="match status" value="1"/>
</dbReference>
<dbReference type="Gene3D" id="3.30.230.70">
    <property type="entry name" value="GHMP Kinase, N-terminal domain"/>
    <property type="match status" value="1"/>
</dbReference>
<dbReference type="HAMAP" id="MF_00564">
    <property type="entry name" value="RNase_PH"/>
    <property type="match status" value="1"/>
</dbReference>
<dbReference type="InterPro" id="IPR001247">
    <property type="entry name" value="ExoRNase_PH_dom1"/>
</dbReference>
<dbReference type="InterPro" id="IPR015847">
    <property type="entry name" value="ExoRNase_PH_dom2"/>
</dbReference>
<dbReference type="InterPro" id="IPR036345">
    <property type="entry name" value="ExoRNase_PH_dom2_sf"/>
</dbReference>
<dbReference type="InterPro" id="IPR027408">
    <property type="entry name" value="PNPase/RNase_PH_dom_sf"/>
</dbReference>
<dbReference type="InterPro" id="IPR020568">
    <property type="entry name" value="Ribosomal_Su5_D2-typ_SF"/>
</dbReference>
<dbReference type="InterPro" id="IPR050080">
    <property type="entry name" value="RNase_PH"/>
</dbReference>
<dbReference type="InterPro" id="IPR002381">
    <property type="entry name" value="RNase_PH_bac-type"/>
</dbReference>
<dbReference type="InterPro" id="IPR018336">
    <property type="entry name" value="RNase_PH_CS"/>
</dbReference>
<dbReference type="NCBIfam" id="TIGR01966">
    <property type="entry name" value="RNasePH"/>
    <property type="match status" value="1"/>
</dbReference>
<dbReference type="PANTHER" id="PTHR11953">
    <property type="entry name" value="EXOSOME COMPLEX COMPONENT"/>
    <property type="match status" value="1"/>
</dbReference>
<dbReference type="PANTHER" id="PTHR11953:SF0">
    <property type="entry name" value="EXOSOME COMPLEX COMPONENT RRP41"/>
    <property type="match status" value="1"/>
</dbReference>
<dbReference type="Pfam" id="PF01138">
    <property type="entry name" value="RNase_PH"/>
    <property type="match status" value="1"/>
</dbReference>
<dbReference type="Pfam" id="PF03725">
    <property type="entry name" value="RNase_PH_C"/>
    <property type="match status" value="1"/>
</dbReference>
<dbReference type="SUPFAM" id="SSF55666">
    <property type="entry name" value="Ribonuclease PH domain 2-like"/>
    <property type="match status" value="1"/>
</dbReference>
<dbReference type="SUPFAM" id="SSF54211">
    <property type="entry name" value="Ribosomal protein S5 domain 2-like"/>
    <property type="match status" value="1"/>
</dbReference>
<dbReference type="PROSITE" id="PS01277">
    <property type="entry name" value="RIBONUCLEASE_PH"/>
    <property type="match status" value="1"/>
</dbReference>
<organism>
    <name type="scientific">Rickettsia peacockii (strain Rustic)</name>
    <dbReference type="NCBI Taxonomy" id="562019"/>
    <lineage>
        <taxon>Bacteria</taxon>
        <taxon>Pseudomonadati</taxon>
        <taxon>Pseudomonadota</taxon>
        <taxon>Alphaproteobacteria</taxon>
        <taxon>Rickettsiales</taxon>
        <taxon>Rickettsiaceae</taxon>
        <taxon>Rickettsieae</taxon>
        <taxon>Rickettsia</taxon>
        <taxon>spotted fever group</taxon>
    </lineage>
</organism>
<sequence>MRQSGRKSNQLRPISLELSPLINAEGSCLIKIGNTHVMCSATCETTVPPFLRGQNQGWITAEYGMLPGSTSQRIKREAALGKQGGRTQEIQRLIGRAMRCVIDVRKLGERQIIIDCDVINADGGTRTAAITGSYVALHLAIRSLMKKRVLKVNPLISQIAAISCGIYKGEAILDLDYLEDSDADVDSNFVFAGNGNLIEVQGTAEKNPFSEEQFLAMLKLAKGGAAELFKLQNQVLLGS</sequence>
<protein>
    <recommendedName>
        <fullName evidence="1">Ribonuclease PH</fullName>
        <shortName evidence="1">RNase PH</shortName>
        <ecNumber evidence="1">2.7.7.56</ecNumber>
    </recommendedName>
    <alternativeName>
        <fullName evidence="1">tRNA nucleotidyltransferase</fullName>
    </alternativeName>
</protein>
<evidence type="ECO:0000255" key="1">
    <source>
        <dbReference type="HAMAP-Rule" id="MF_00564"/>
    </source>
</evidence>
<keyword id="KW-0548">Nucleotidyltransferase</keyword>
<keyword id="KW-0694">RNA-binding</keyword>
<keyword id="KW-0698">rRNA processing</keyword>
<keyword id="KW-0808">Transferase</keyword>
<keyword id="KW-0819">tRNA processing</keyword>
<keyword id="KW-0820">tRNA-binding</keyword>
<proteinExistence type="inferred from homology"/>
<feature type="chain" id="PRO_1000212070" description="Ribonuclease PH">
    <location>
        <begin position="1"/>
        <end position="239"/>
    </location>
</feature>
<feature type="binding site" evidence="1">
    <location>
        <position position="86"/>
    </location>
    <ligand>
        <name>phosphate</name>
        <dbReference type="ChEBI" id="CHEBI:43474"/>
        <note>substrate</note>
    </ligand>
</feature>
<feature type="binding site" evidence="1">
    <location>
        <begin position="124"/>
        <end position="126"/>
    </location>
    <ligand>
        <name>phosphate</name>
        <dbReference type="ChEBI" id="CHEBI:43474"/>
        <note>substrate</note>
    </ligand>
</feature>